<name>BDBC1_BACAN</name>
<proteinExistence type="inferred from homology"/>
<organism>
    <name type="scientific">Bacillus anthracis</name>
    <dbReference type="NCBI Taxonomy" id="1392"/>
    <lineage>
        <taxon>Bacteria</taxon>
        <taxon>Bacillati</taxon>
        <taxon>Bacillota</taxon>
        <taxon>Bacilli</taxon>
        <taxon>Bacillales</taxon>
        <taxon>Bacillaceae</taxon>
        <taxon>Bacillus</taxon>
        <taxon>Bacillus cereus group</taxon>
    </lineage>
</organism>
<accession>Q81UU9</accession>
<accession>Q6I332</accession>
<accession>Q6KWV1</accession>
<feature type="chain" id="PRO_0000059370" description="Probable disulfide formation protein C 1">
    <location>
        <begin position="1"/>
        <end position="139"/>
    </location>
</feature>
<feature type="transmembrane region" description="Helical" evidence="2">
    <location>
        <begin position="8"/>
        <end position="27"/>
    </location>
</feature>
<feature type="transmembrane region" description="Helical" evidence="2">
    <location>
        <begin position="42"/>
        <end position="61"/>
    </location>
</feature>
<feature type="transmembrane region" description="Helical" evidence="2">
    <location>
        <begin position="68"/>
        <end position="85"/>
    </location>
</feature>
<feature type="transmembrane region" description="Helical" evidence="2">
    <location>
        <begin position="113"/>
        <end position="135"/>
    </location>
</feature>
<feature type="disulfide bond" description="Redox-active" evidence="1">
    <location>
        <begin position="37"/>
        <end position="40"/>
    </location>
</feature>
<feature type="disulfide bond" description="Redox-active" evidence="1">
    <location>
        <begin position="99"/>
        <end position="104"/>
    </location>
</feature>
<comment type="function">
    <text evidence="1">Required for disulfide bond formation in some proteins.</text>
</comment>
<comment type="subcellular location">
    <subcellularLocation>
        <location evidence="3">Cell membrane</location>
        <topology evidence="3">Multi-pass membrane protein</topology>
    </subcellularLocation>
</comment>
<comment type="similarity">
    <text evidence="3">Belongs to the DsbB family. BdbC subfamily.</text>
</comment>
<protein>
    <recommendedName>
        <fullName>Probable disulfide formation protein C 1</fullName>
    </recommendedName>
    <alternativeName>
        <fullName>Disulfide oxidoreductase C 1</fullName>
    </alternativeName>
    <alternativeName>
        <fullName>Thiol-disulfide oxidoreductase C 1</fullName>
    </alternativeName>
</protein>
<gene>
    <name type="primary">bdbC1</name>
    <name type="ordered locus">BA_0758</name>
    <name type="ordered locus">GBAA_0758</name>
    <name type="ordered locus">BAS0722</name>
</gene>
<sequence length="139" mass="15587">MGREKKQEYALFTAWGASFIATLGSLYFSEIMKFEPCVLCWYQRIFMYPFVLWLGIAVVKKDYRIASYSLPIASIGACISLYHYVIQKVAAFSAAGAACGRVPCTGEYINWFGFVTIPFLALIGFITIAVCSFIVIKNK</sequence>
<evidence type="ECO:0000250" key="1"/>
<evidence type="ECO:0000255" key="2"/>
<evidence type="ECO:0000305" key="3"/>
<keyword id="KW-1003">Cell membrane</keyword>
<keyword id="KW-0143">Chaperone</keyword>
<keyword id="KW-1015">Disulfide bond</keyword>
<keyword id="KW-0249">Electron transport</keyword>
<keyword id="KW-0472">Membrane</keyword>
<keyword id="KW-0560">Oxidoreductase</keyword>
<keyword id="KW-0676">Redox-active center</keyword>
<keyword id="KW-1185">Reference proteome</keyword>
<keyword id="KW-0812">Transmembrane</keyword>
<keyword id="KW-1133">Transmembrane helix</keyword>
<keyword id="KW-0813">Transport</keyword>
<reference key="1">
    <citation type="journal article" date="2003" name="Nature">
        <title>The genome sequence of Bacillus anthracis Ames and comparison to closely related bacteria.</title>
        <authorList>
            <person name="Read T.D."/>
            <person name="Peterson S.N."/>
            <person name="Tourasse N.J."/>
            <person name="Baillie L.W."/>
            <person name="Paulsen I.T."/>
            <person name="Nelson K.E."/>
            <person name="Tettelin H."/>
            <person name="Fouts D.E."/>
            <person name="Eisen J.A."/>
            <person name="Gill S.R."/>
            <person name="Holtzapple E.K."/>
            <person name="Okstad O.A."/>
            <person name="Helgason E."/>
            <person name="Rilstone J."/>
            <person name="Wu M."/>
            <person name="Kolonay J.F."/>
            <person name="Beanan M.J."/>
            <person name="Dodson R.J."/>
            <person name="Brinkac L.M."/>
            <person name="Gwinn M.L."/>
            <person name="DeBoy R.T."/>
            <person name="Madpu R."/>
            <person name="Daugherty S.C."/>
            <person name="Durkin A.S."/>
            <person name="Haft D.H."/>
            <person name="Nelson W.C."/>
            <person name="Peterson J.D."/>
            <person name="Pop M."/>
            <person name="Khouri H.M."/>
            <person name="Radune D."/>
            <person name="Benton J.L."/>
            <person name="Mahamoud Y."/>
            <person name="Jiang L."/>
            <person name="Hance I.R."/>
            <person name="Weidman J.F."/>
            <person name="Berry K.J."/>
            <person name="Plaut R.D."/>
            <person name="Wolf A.M."/>
            <person name="Watkins K.L."/>
            <person name="Nierman W.C."/>
            <person name="Hazen A."/>
            <person name="Cline R.T."/>
            <person name="Redmond C."/>
            <person name="Thwaite J.E."/>
            <person name="White O."/>
            <person name="Salzberg S.L."/>
            <person name="Thomason B."/>
            <person name="Friedlander A.M."/>
            <person name="Koehler T.M."/>
            <person name="Hanna P.C."/>
            <person name="Kolstoe A.-B."/>
            <person name="Fraser C.M."/>
        </authorList>
    </citation>
    <scope>NUCLEOTIDE SEQUENCE [LARGE SCALE GENOMIC DNA]</scope>
    <source>
        <strain>Ames / isolate Porton</strain>
    </source>
</reference>
<reference key="2">
    <citation type="journal article" date="2009" name="J. Bacteriol.">
        <title>The complete genome sequence of Bacillus anthracis Ames 'Ancestor'.</title>
        <authorList>
            <person name="Ravel J."/>
            <person name="Jiang L."/>
            <person name="Stanley S.T."/>
            <person name="Wilson M.R."/>
            <person name="Decker R.S."/>
            <person name="Read T.D."/>
            <person name="Worsham P."/>
            <person name="Keim P.S."/>
            <person name="Salzberg S.L."/>
            <person name="Fraser-Liggett C.M."/>
            <person name="Rasko D.A."/>
        </authorList>
    </citation>
    <scope>NUCLEOTIDE SEQUENCE [LARGE SCALE GENOMIC DNA]</scope>
    <source>
        <strain>Ames ancestor</strain>
    </source>
</reference>
<reference key="3">
    <citation type="submission" date="2004-01" db="EMBL/GenBank/DDBJ databases">
        <title>Complete genome sequence of Bacillus anthracis Sterne.</title>
        <authorList>
            <person name="Brettin T.S."/>
            <person name="Bruce D."/>
            <person name="Challacombe J.F."/>
            <person name="Gilna P."/>
            <person name="Han C."/>
            <person name="Hill K."/>
            <person name="Hitchcock P."/>
            <person name="Jackson P."/>
            <person name="Keim P."/>
            <person name="Longmire J."/>
            <person name="Lucas S."/>
            <person name="Okinaka R."/>
            <person name="Richardson P."/>
            <person name="Rubin E."/>
            <person name="Tice H."/>
        </authorList>
    </citation>
    <scope>NUCLEOTIDE SEQUENCE [LARGE SCALE GENOMIC DNA]</scope>
    <source>
        <strain>Sterne</strain>
    </source>
</reference>
<dbReference type="EMBL" id="AE016879">
    <property type="protein sequence ID" value="AAP24768.1"/>
    <property type="molecule type" value="Genomic_DNA"/>
</dbReference>
<dbReference type="EMBL" id="AE017334">
    <property type="protein sequence ID" value="AAT29865.1"/>
    <property type="molecule type" value="Genomic_DNA"/>
</dbReference>
<dbReference type="EMBL" id="AE017225">
    <property type="protein sequence ID" value="AAT53049.1"/>
    <property type="molecule type" value="Genomic_DNA"/>
</dbReference>
<dbReference type="RefSeq" id="NP_843282.1">
    <property type="nucleotide sequence ID" value="NC_003997.3"/>
</dbReference>
<dbReference type="RefSeq" id="WP_000532259.1">
    <property type="nucleotide sequence ID" value="NZ_WXXJ01000017.1"/>
</dbReference>
<dbReference type="RefSeq" id="YP_026998.1">
    <property type="nucleotide sequence ID" value="NC_005945.1"/>
</dbReference>
<dbReference type="STRING" id="261594.GBAA_0758"/>
<dbReference type="DNASU" id="1088398"/>
<dbReference type="GeneID" id="45020836"/>
<dbReference type="KEGG" id="ban:BA_0758"/>
<dbReference type="KEGG" id="bar:GBAA_0758"/>
<dbReference type="KEGG" id="bat:BAS0722"/>
<dbReference type="PATRIC" id="fig|198094.11.peg.758"/>
<dbReference type="eggNOG" id="COG1495">
    <property type="taxonomic scope" value="Bacteria"/>
</dbReference>
<dbReference type="HOGENOM" id="CLU_128688_0_0_9"/>
<dbReference type="OMA" id="SGQYINW"/>
<dbReference type="OrthoDB" id="158402at2"/>
<dbReference type="Proteomes" id="UP000000427">
    <property type="component" value="Chromosome"/>
</dbReference>
<dbReference type="Proteomes" id="UP000000594">
    <property type="component" value="Chromosome"/>
</dbReference>
<dbReference type="GO" id="GO:0005886">
    <property type="term" value="C:plasma membrane"/>
    <property type="evidence" value="ECO:0007669"/>
    <property type="project" value="UniProtKB-SubCell"/>
</dbReference>
<dbReference type="GO" id="GO:0015035">
    <property type="term" value="F:protein-disulfide reductase activity"/>
    <property type="evidence" value="ECO:0007669"/>
    <property type="project" value="UniProtKB-UniRule"/>
</dbReference>
<dbReference type="GO" id="GO:0006457">
    <property type="term" value="P:protein folding"/>
    <property type="evidence" value="ECO:0007669"/>
    <property type="project" value="InterPro"/>
</dbReference>
<dbReference type="FunFam" id="1.20.1550.10:FF:000003">
    <property type="entry name" value="Probable disulfide formation protein"/>
    <property type="match status" value="1"/>
</dbReference>
<dbReference type="Gene3D" id="1.20.1550.10">
    <property type="entry name" value="DsbB-like"/>
    <property type="match status" value="1"/>
</dbReference>
<dbReference type="HAMAP" id="MF_00287">
    <property type="entry name" value="BdbC"/>
    <property type="match status" value="1"/>
</dbReference>
<dbReference type="InterPro" id="IPR003752">
    <property type="entry name" value="DiS_bond_form_DsbB/BdbC"/>
</dbReference>
<dbReference type="InterPro" id="IPR012187">
    <property type="entry name" value="Disulphide_bond_form_BdbC"/>
</dbReference>
<dbReference type="InterPro" id="IPR023380">
    <property type="entry name" value="DsbB-like_sf"/>
</dbReference>
<dbReference type="NCBIfam" id="NF002849">
    <property type="entry name" value="PRK03113.1"/>
    <property type="match status" value="1"/>
</dbReference>
<dbReference type="PANTHER" id="PTHR43469">
    <property type="entry name" value="DISULFIDE FORMATION PROTEIN-RELATED"/>
    <property type="match status" value="1"/>
</dbReference>
<dbReference type="PANTHER" id="PTHR43469:SF1">
    <property type="entry name" value="SPBETA PROPHAGE-DERIVED DISULFIDE BOND FORMATION PROTEIN B"/>
    <property type="match status" value="1"/>
</dbReference>
<dbReference type="Pfam" id="PF02600">
    <property type="entry name" value="DsbB"/>
    <property type="match status" value="1"/>
</dbReference>
<dbReference type="PIRSF" id="PIRSF036659">
    <property type="entry name" value="BdbC"/>
    <property type="match status" value="1"/>
</dbReference>
<dbReference type="SUPFAM" id="SSF158442">
    <property type="entry name" value="DsbB-like"/>
    <property type="match status" value="1"/>
</dbReference>